<evidence type="ECO:0000250" key="1">
    <source>
        <dbReference type="UniProtKB" id="O49377"/>
    </source>
</evidence>
<evidence type="ECO:0000250" key="2">
    <source>
        <dbReference type="UniProtKB" id="Q12255"/>
    </source>
</evidence>
<evidence type="ECO:0000255" key="3"/>
<evidence type="ECO:0000255" key="4">
    <source>
        <dbReference type="PROSITE-ProRule" id="PRU00231"/>
    </source>
</evidence>
<evidence type="ECO:0000255" key="5">
    <source>
        <dbReference type="PROSITE-ProRule" id="PRU00290"/>
    </source>
</evidence>
<evidence type="ECO:0000269" key="6">
    <source>
    </source>
</evidence>
<evidence type="ECO:0000269" key="7">
    <source>
    </source>
</evidence>
<evidence type="ECO:0000269" key="8">
    <source>
    </source>
</evidence>
<evidence type="ECO:0000303" key="9">
    <source>
    </source>
</evidence>
<evidence type="ECO:0000305" key="10"/>
<evidence type="ECO:0000305" key="11">
    <source>
    </source>
</evidence>
<evidence type="ECO:0000312" key="12">
    <source>
        <dbReference type="Araport" id="AT5G11150"/>
    </source>
</evidence>
<evidence type="ECO:0000312" key="13">
    <source>
        <dbReference type="EMBL" id="CAB96650.1"/>
    </source>
</evidence>
<sequence length="221" mass="25320">MAIIFALVARGTVVLSEFSATSTNASSISKQILEKLPGNDSDSHMSYSQDRYIFHVKRTDGLTVLCMADETAGRNIPFAFLDDIHQRFVKTYGRAIHSAQAYSMNDEFSRVLSQQMEFYSNDPNADRMSRIKGEMSQVRNVMIENIDKVLDRGERLELLVDKTENMQGNTFRFRKQARRYRTIMWWRNVKLTIALILVLALVVYIAMAFVCHGPSLPSCFK</sequence>
<proteinExistence type="evidence at protein level"/>
<dbReference type="EMBL" id="AL360314">
    <property type="protein sequence ID" value="CAB96650.1"/>
    <property type="molecule type" value="Genomic_DNA"/>
</dbReference>
<dbReference type="EMBL" id="CP002688">
    <property type="protein sequence ID" value="AED91639.1"/>
    <property type="molecule type" value="Genomic_DNA"/>
</dbReference>
<dbReference type="EMBL" id="AY091002">
    <property type="protein sequence ID" value="AAM14024.1"/>
    <property type="molecule type" value="mRNA"/>
</dbReference>
<dbReference type="EMBL" id="AY122934">
    <property type="protein sequence ID" value="AAM67467.1"/>
    <property type="molecule type" value="mRNA"/>
</dbReference>
<dbReference type="RefSeq" id="NP_196676.1">
    <property type="nucleotide sequence ID" value="NM_121153.5"/>
</dbReference>
<dbReference type="SMR" id="Q9LFP1"/>
<dbReference type="BioGRID" id="16262">
    <property type="interactions" value="1"/>
</dbReference>
<dbReference type="FunCoup" id="Q9LFP1">
    <property type="interactions" value="2098"/>
</dbReference>
<dbReference type="IntAct" id="Q9LFP1">
    <property type="interactions" value="1"/>
</dbReference>
<dbReference type="STRING" id="3702.Q9LFP1"/>
<dbReference type="PaxDb" id="3702-AT5G11150.1"/>
<dbReference type="ProteomicsDB" id="242305"/>
<dbReference type="EnsemblPlants" id="AT5G11150.1">
    <property type="protein sequence ID" value="AT5G11150.1"/>
    <property type="gene ID" value="AT5G11150"/>
</dbReference>
<dbReference type="GeneID" id="830984"/>
<dbReference type="Gramene" id="AT5G11150.1">
    <property type="protein sequence ID" value="AT5G11150.1"/>
    <property type="gene ID" value="AT5G11150"/>
</dbReference>
<dbReference type="KEGG" id="ath:AT5G11150"/>
<dbReference type="Araport" id="AT5G11150"/>
<dbReference type="TAIR" id="AT5G11150">
    <property type="gene designation" value="VAMP713"/>
</dbReference>
<dbReference type="eggNOG" id="KOG0859">
    <property type="taxonomic scope" value="Eukaryota"/>
</dbReference>
<dbReference type="HOGENOM" id="CLU_064620_1_2_1"/>
<dbReference type="InParanoid" id="Q9LFP1"/>
<dbReference type="OMA" id="AYSMNDA"/>
<dbReference type="OrthoDB" id="248747at2759"/>
<dbReference type="PhylomeDB" id="Q9LFP1"/>
<dbReference type="CD-CODE" id="4299E36E">
    <property type="entry name" value="Nucleolus"/>
</dbReference>
<dbReference type="PRO" id="PR:Q9LFP1"/>
<dbReference type="Proteomes" id="UP000006548">
    <property type="component" value="Chromosome 5"/>
</dbReference>
<dbReference type="ExpressionAtlas" id="Q9LFP1">
    <property type="expression patterns" value="baseline and differential"/>
</dbReference>
<dbReference type="GO" id="GO:0005794">
    <property type="term" value="C:Golgi apparatus"/>
    <property type="evidence" value="ECO:0007005"/>
    <property type="project" value="TAIR"/>
</dbReference>
<dbReference type="GO" id="GO:0030897">
    <property type="term" value="C:HOPS complex"/>
    <property type="evidence" value="ECO:0000314"/>
    <property type="project" value="UniProtKB"/>
</dbReference>
<dbReference type="GO" id="GO:0005886">
    <property type="term" value="C:plasma membrane"/>
    <property type="evidence" value="ECO:0007005"/>
    <property type="project" value="TAIR"/>
</dbReference>
<dbReference type="GO" id="GO:0005774">
    <property type="term" value="C:vacuolar membrane"/>
    <property type="evidence" value="ECO:0000304"/>
    <property type="project" value="TAIR"/>
</dbReference>
<dbReference type="GO" id="GO:0005773">
    <property type="term" value="C:vacuole"/>
    <property type="evidence" value="ECO:0007005"/>
    <property type="project" value="TAIR"/>
</dbReference>
<dbReference type="GO" id="GO:0015031">
    <property type="term" value="P:protein transport"/>
    <property type="evidence" value="ECO:0007669"/>
    <property type="project" value="UniProtKB-KW"/>
</dbReference>
<dbReference type="GO" id="GO:0009651">
    <property type="term" value="P:response to salt stress"/>
    <property type="evidence" value="ECO:0000315"/>
    <property type="project" value="TAIR"/>
</dbReference>
<dbReference type="GO" id="GO:0016192">
    <property type="term" value="P:vesicle-mediated transport"/>
    <property type="evidence" value="ECO:0007669"/>
    <property type="project" value="InterPro"/>
</dbReference>
<dbReference type="CDD" id="cd14824">
    <property type="entry name" value="Longin"/>
    <property type="match status" value="1"/>
</dbReference>
<dbReference type="CDD" id="cd15843">
    <property type="entry name" value="R-SNARE"/>
    <property type="match status" value="1"/>
</dbReference>
<dbReference type="FunFam" id="1.20.5.110:FF:000004">
    <property type="entry name" value="Vesicle-associated membrane protein 7"/>
    <property type="match status" value="1"/>
</dbReference>
<dbReference type="FunFam" id="3.30.450.50:FF:000008">
    <property type="entry name" value="Vesicle-associated membrane protein 711"/>
    <property type="match status" value="1"/>
</dbReference>
<dbReference type="Gene3D" id="1.20.5.110">
    <property type="match status" value="1"/>
</dbReference>
<dbReference type="Gene3D" id="3.30.450.50">
    <property type="entry name" value="Longin domain"/>
    <property type="match status" value="1"/>
</dbReference>
<dbReference type="InterPro" id="IPR011012">
    <property type="entry name" value="Longin-like_dom_sf"/>
</dbReference>
<dbReference type="InterPro" id="IPR010908">
    <property type="entry name" value="Longin_dom"/>
</dbReference>
<dbReference type="InterPro" id="IPR001388">
    <property type="entry name" value="Synaptobrevin-like"/>
</dbReference>
<dbReference type="InterPro" id="IPR051097">
    <property type="entry name" value="Synaptobrevin-like_transport"/>
</dbReference>
<dbReference type="InterPro" id="IPR042855">
    <property type="entry name" value="V_SNARE_CC"/>
</dbReference>
<dbReference type="PANTHER" id="PTHR21136">
    <property type="entry name" value="SNARE PROTEINS"/>
    <property type="match status" value="1"/>
</dbReference>
<dbReference type="PANTHER" id="PTHR21136:SF177">
    <property type="entry name" value="VESICLE-ASSOCIATED MEMBRANE PROTEIN 713"/>
    <property type="match status" value="1"/>
</dbReference>
<dbReference type="Pfam" id="PF13774">
    <property type="entry name" value="Longin"/>
    <property type="match status" value="1"/>
</dbReference>
<dbReference type="Pfam" id="PF00957">
    <property type="entry name" value="Synaptobrevin"/>
    <property type="match status" value="1"/>
</dbReference>
<dbReference type="PRINTS" id="PR00219">
    <property type="entry name" value="SYNAPTOBREVN"/>
</dbReference>
<dbReference type="SMART" id="SM01270">
    <property type="entry name" value="Longin"/>
    <property type="match status" value="1"/>
</dbReference>
<dbReference type="SUPFAM" id="SSF58038">
    <property type="entry name" value="SNARE fusion complex"/>
    <property type="match status" value="1"/>
</dbReference>
<dbReference type="SUPFAM" id="SSF64356">
    <property type="entry name" value="SNARE-like"/>
    <property type="match status" value="1"/>
</dbReference>
<dbReference type="PROSITE" id="PS50859">
    <property type="entry name" value="LONGIN"/>
    <property type="match status" value="1"/>
</dbReference>
<dbReference type="PROSITE" id="PS00417">
    <property type="entry name" value="SYNAPTOBREVIN"/>
    <property type="match status" value="1"/>
</dbReference>
<dbReference type="PROSITE" id="PS50892">
    <property type="entry name" value="V_SNARE"/>
    <property type="match status" value="1"/>
</dbReference>
<organism>
    <name type="scientific">Arabidopsis thaliana</name>
    <name type="common">Mouse-ear cress</name>
    <dbReference type="NCBI Taxonomy" id="3702"/>
    <lineage>
        <taxon>Eukaryota</taxon>
        <taxon>Viridiplantae</taxon>
        <taxon>Streptophyta</taxon>
        <taxon>Embryophyta</taxon>
        <taxon>Tracheophyta</taxon>
        <taxon>Spermatophyta</taxon>
        <taxon>Magnoliopsida</taxon>
        <taxon>eudicotyledons</taxon>
        <taxon>Gunneridae</taxon>
        <taxon>Pentapetalae</taxon>
        <taxon>rosids</taxon>
        <taxon>malvids</taxon>
        <taxon>Brassicales</taxon>
        <taxon>Brassicaceae</taxon>
        <taxon>Camelineae</taxon>
        <taxon>Arabidopsis</taxon>
    </lineage>
</organism>
<feature type="initiator methionine" description="Removed" evidence="1">
    <location>
        <position position="1"/>
    </location>
</feature>
<feature type="chain" id="PRO_0000206752" description="Vesicle-associated membrane protein 713">
    <location>
        <begin position="2"/>
        <end position="221"/>
    </location>
</feature>
<feature type="topological domain" description="Cytoplasmic" evidence="3">
    <location>
        <begin position="2"/>
        <end position="190"/>
    </location>
</feature>
<feature type="transmembrane region" description="Helical; Anchor for type IV membrane protein" evidence="3">
    <location>
        <begin position="191"/>
        <end position="211"/>
    </location>
</feature>
<feature type="topological domain" description="Vesicular" evidence="3">
    <location>
        <begin position="212"/>
        <end position="221"/>
    </location>
</feature>
<feature type="domain" description="Longin" evidence="4">
    <location>
        <begin position="7"/>
        <end position="112"/>
    </location>
</feature>
<feature type="domain" description="v-SNARE coiled-coil homology" evidence="5">
    <location>
        <begin position="127"/>
        <end position="187"/>
    </location>
</feature>
<feature type="modified residue" description="N-acetylalanine" evidence="1">
    <location>
        <position position="2"/>
    </location>
</feature>
<name>VA713_ARATH</name>
<protein>
    <recommendedName>
        <fullName evidence="9">Vesicle-associated membrane protein 713</fullName>
        <shortName evidence="9">AtVAMP713</shortName>
    </recommendedName>
</protein>
<comment type="function">
    <text evidence="11">Involved in the targeting and/or fusion of transport vesicles to their target membrane.</text>
</comment>
<comment type="subunit">
    <text evidence="8">Interacts with subunits of the vacuole protein sorting (HOPS) complex including VPS11, VCL1, VPS18, VPS33, VPS39 and VPS41.</text>
</comment>
<comment type="subcellular location">
    <subcellularLocation>
        <location evidence="6">Vacuole membrane</location>
        <topology evidence="2">Single-pass type IV membrane protein</topology>
    </subcellularLocation>
    <subcellularLocation>
        <location evidence="6">Prevacuolar compartment membrane</location>
        <topology evidence="2">Single-pass type IV membrane protein</topology>
    </subcellularLocation>
    <text evidence="8">Strong colocalization with VAMP713 at the contact sites of two vacuoles.</text>
</comment>
<comment type="tissue specificity">
    <text evidence="6">Highly expressed in stems and roots. Detected in flowers and leaves.</text>
</comment>
<comment type="domain">
    <text evidence="7">The longin domain is critical for the vacuolar localization.</text>
</comment>
<comment type="similarity">
    <text evidence="10">Belongs to the synaptobrevin family.</text>
</comment>
<reference key="1">
    <citation type="journal article" date="2000" name="Nature">
        <title>Sequence and analysis of chromosome 5 of the plant Arabidopsis thaliana.</title>
        <authorList>
            <person name="Tabata S."/>
            <person name="Kaneko T."/>
            <person name="Nakamura Y."/>
            <person name="Kotani H."/>
            <person name="Kato T."/>
            <person name="Asamizu E."/>
            <person name="Miyajima N."/>
            <person name="Sasamoto S."/>
            <person name="Kimura T."/>
            <person name="Hosouchi T."/>
            <person name="Kawashima K."/>
            <person name="Kohara M."/>
            <person name="Matsumoto M."/>
            <person name="Matsuno A."/>
            <person name="Muraki A."/>
            <person name="Nakayama S."/>
            <person name="Nakazaki N."/>
            <person name="Naruo K."/>
            <person name="Okumura S."/>
            <person name="Shinpo S."/>
            <person name="Takeuchi C."/>
            <person name="Wada T."/>
            <person name="Watanabe A."/>
            <person name="Yamada M."/>
            <person name="Yasuda M."/>
            <person name="Sato S."/>
            <person name="de la Bastide M."/>
            <person name="Huang E."/>
            <person name="Spiegel L."/>
            <person name="Gnoj L."/>
            <person name="O'Shaughnessy A."/>
            <person name="Preston R."/>
            <person name="Habermann K."/>
            <person name="Murray J."/>
            <person name="Johnson D."/>
            <person name="Rohlfing T."/>
            <person name="Nelson J."/>
            <person name="Stoneking T."/>
            <person name="Pepin K."/>
            <person name="Spieth J."/>
            <person name="Sekhon M."/>
            <person name="Armstrong J."/>
            <person name="Becker M."/>
            <person name="Belter E."/>
            <person name="Cordum H."/>
            <person name="Cordes M."/>
            <person name="Courtney L."/>
            <person name="Courtney W."/>
            <person name="Dante M."/>
            <person name="Du H."/>
            <person name="Edwards J."/>
            <person name="Fryman J."/>
            <person name="Haakensen B."/>
            <person name="Lamar E."/>
            <person name="Latreille P."/>
            <person name="Leonard S."/>
            <person name="Meyer R."/>
            <person name="Mulvaney E."/>
            <person name="Ozersky P."/>
            <person name="Riley A."/>
            <person name="Strowmatt C."/>
            <person name="Wagner-McPherson C."/>
            <person name="Wollam A."/>
            <person name="Yoakum M."/>
            <person name="Bell M."/>
            <person name="Dedhia N."/>
            <person name="Parnell L."/>
            <person name="Shah R."/>
            <person name="Rodriguez M."/>
            <person name="Hoon See L."/>
            <person name="Vil D."/>
            <person name="Baker J."/>
            <person name="Kirchoff K."/>
            <person name="Toth K."/>
            <person name="King L."/>
            <person name="Bahret A."/>
            <person name="Miller B."/>
            <person name="Marra M.A."/>
            <person name="Martienssen R."/>
            <person name="McCombie W.R."/>
            <person name="Wilson R.K."/>
            <person name="Murphy G."/>
            <person name="Bancroft I."/>
            <person name="Volckaert G."/>
            <person name="Wambutt R."/>
            <person name="Duesterhoeft A."/>
            <person name="Stiekema W."/>
            <person name="Pohl T."/>
            <person name="Entian K.-D."/>
            <person name="Terryn N."/>
            <person name="Hartley N."/>
            <person name="Bent E."/>
            <person name="Johnson S."/>
            <person name="Langham S.-A."/>
            <person name="McCullagh B."/>
            <person name="Robben J."/>
            <person name="Grymonprez B."/>
            <person name="Zimmermann W."/>
            <person name="Ramsperger U."/>
            <person name="Wedler H."/>
            <person name="Balke K."/>
            <person name="Wedler E."/>
            <person name="Peters S."/>
            <person name="van Staveren M."/>
            <person name="Dirkse W."/>
            <person name="Mooijman P."/>
            <person name="Klein Lankhorst R."/>
            <person name="Weitzenegger T."/>
            <person name="Bothe G."/>
            <person name="Rose M."/>
            <person name="Hauf J."/>
            <person name="Berneiser S."/>
            <person name="Hempel S."/>
            <person name="Feldpausch M."/>
            <person name="Lamberth S."/>
            <person name="Villarroel R."/>
            <person name="Gielen J."/>
            <person name="Ardiles W."/>
            <person name="Bents O."/>
            <person name="Lemcke K."/>
            <person name="Kolesov G."/>
            <person name="Mayer K.F.X."/>
            <person name="Rudd S."/>
            <person name="Schoof H."/>
            <person name="Schueller C."/>
            <person name="Zaccaria P."/>
            <person name="Mewes H.-W."/>
            <person name="Bevan M."/>
            <person name="Fransz P.F."/>
        </authorList>
    </citation>
    <scope>NUCLEOTIDE SEQUENCE [LARGE SCALE GENOMIC DNA]</scope>
    <source>
        <strain>cv. Columbia</strain>
    </source>
</reference>
<reference key="2">
    <citation type="journal article" date="2017" name="Plant J.">
        <title>Araport11: a complete reannotation of the Arabidopsis thaliana reference genome.</title>
        <authorList>
            <person name="Cheng C.Y."/>
            <person name="Krishnakumar V."/>
            <person name="Chan A.P."/>
            <person name="Thibaud-Nissen F."/>
            <person name="Schobel S."/>
            <person name="Town C.D."/>
        </authorList>
    </citation>
    <scope>GENOME REANNOTATION</scope>
    <source>
        <strain>cv. Columbia</strain>
    </source>
</reference>
<reference key="3">
    <citation type="journal article" date="2003" name="Science">
        <title>Empirical analysis of transcriptional activity in the Arabidopsis genome.</title>
        <authorList>
            <person name="Yamada K."/>
            <person name="Lim J."/>
            <person name="Dale J.M."/>
            <person name="Chen H."/>
            <person name="Shinn P."/>
            <person name="Palm C.J."/>
            <person name="Southwick A.M."/>
            <person name="Wu H.C."/>
            <person name="Kim C.J."/>
            <person name="Nguyen M."/>
            <person name="Pham P.K."/>
            <person name="Cheuk R.F."/>
            <person name="Karlin-Newmann G."/>
            <person name="Liu S.X."/>
            <person name="Lam B."/>
            <person name="Sakano H."/>
            <person name="Wu T."/>
            <person name="Yu G."/>
            <person name="Miranda M."/>
            <person name="Quach H.L."/>
            <person name="Tripp M."/>
            <person name="Chang C.H."/>
            <person name="Lee J.M."/>
            <person name="Toriumi M.J."/>
            <person name="Chan M.M."/>
            <person name="Tang C.C."/>
            <person name="Onodera C.S."/>
            <person name="Deng J.M."/>
            <person name="Akiyama K."/>
            <person name="Ansari Y."/>
            <person name="Arakawa T."/>
            <person name="Banh J."/>
            <person name="Banno F."/>
            <person name="Bowser L."/>
            <person name="Brooks S.Y."/>
            <person name="Carninci P."/>
            <person name="Chao Q."/>
            <person name="Choy N."/>
            <person name="Enju A."/>
            <person name="Goldsmith A.D."/>
            <person name="Gurjal M."/>
            <person name="Hansen N.F."/>
            <person name="Hayashizaki Y."/>
            <person name="Johnson-Hopson C."/>
            <person name="Hsuan V.W."/>
            <person name="Iida K."/>
            <person name="Karnes M."/>
            <person name="Khan S."/>
            <person name="Koesema E."/>
            <person name="Ishida J."/>
            <person name="Jiang P.X."/>
            <person name="Jones T."/>
            <person name="Kawai J."/>
            <person name="Kamiya A."/>
            <person name="Meyers C."/>
            <person name="Nakajima M."/>
            <person name="Narusaka M."/>
            <person name="Seki M."/>
            <person name="Sakurai T."/>
            <person name="Satou M."/>
            <person name="Tamse R."/>
            <person name="Vaysberg M."/>
            <person name="Wallender E.K."/>
            <person name="Wong C."/>
            <person name="Yamamura Y."/>
            <person name="Yuan S."/>
            <person name="Shinozaki K."/>
            <person name="Davis R.W."/>
            <person name="Theologis A."/>
            <person name="Ecker J.R."/>
        </authorList>
    </citation>
    <scope>NUCLEOTIDE SEQUENCE [LARGE SCALE MRNA]</scope>
    <source>
        <strain>cv. Columbia</strain>
    </source>
</reference>
<reference key="4">
    <citation type="journal article" date="2000" name="Plant Physiol.">
        <title>The Arabidopsis genome. An abundance of soluble N-ethylmaleimide-sensitive factor adaptor protein receptors.</title>
        <authorList>
            <person name="Sanderfoot A.A."/>
            <person name="Assaad F.F."/>
            <person name="Raikhel N.V."/>
        </authorList>
    </citation>
    <scope>GENE FAMILY</scope>
    <scope>NOMENCLATURE</scope>
</reference>
<reference key="5">
    <citation type="journal article" date="2004" name="Cell Struct. Funct.">
        <title>Systematic analysis of SNARE molecules in Arabidopsis: dissection of the post-Golgi network in plant cells.</title>
        <authorList>
            <person name="Uemura T."/>
            <person name="Ueda T."/>
            <person name="Ohniwa R.L."/>
            <person name="Nakano A."/>
            <person name="Takeyasu K."/>
            <person name="Sato M.H."/>
        </authorList>
    </citation>
    <scope>TISSUE SPECIFICITY</scope>
    <scope>SUBCELLULAR LOCATION</scope>
</reference>
<reference key="6">
    <citation type="journal article" date="2005" name="FEBS Lett.">
        <title>The longin domain regulates subcellular targeting of VAMP7 in Arabidopsis thaliana.</title>
        <authorList>
            <person name="Uemura T."/>
            <person name="Sato M.H."/>
            <person name="Takeyasu K."/>
        </authorList>
    </citation>
    <scope>DOMAIN</scope>
</reference>
<reference key="7">
    <citation type="journal article" date="2018" name="Proc. Natl. Acad. Sci. U.S.A.">
        <title>Distinct sets of tethering complexes, SNARE complexes, and Rab GTPases mediate membrane fusion at the vacuole in Arabidopsis.</title>
        <authorList>
            <person name="Takemoto K."/>
            <person name="Ebine K."/>
            <person name="Askani J.C."/>
            <person name="Krueger F."/>
            <person name="Gonzalez Z.A."/>
            <person name="Ito E."/>
            <person name="Goh T."/>
            <person name="Schumacher K."/>
            <person name="Nakano A."/>
            <person name="Ueda T."/>
        </authorList>
    </citation>
    <scope>SUBUNIT</scope>
    <scope>SUBCELLULAR LOCATION</scope>
</reference>
<keyword id="KW-0007">Acetylation</keyword>
<keyword id="KW-0472">Membrane</keyword>
<keyword id="KW-0653">Protein transport</keyword>
<keyword id="KW-1185">Reference proteome</keyword>
<keyword id="KW-0812">Transmembrane</keyword>
<keyword id="KW-1133">Transmembrane helix</keyword>
<keyword id="KW-0813">Transport</keyword>
<keyword id="KW-0926">Vacuole</keyword>
<accession>Q9LFP1</accession>
<gene>
    <name evidence="9" type="primary">VAMP713</name>
    <name evidence="12" type="ordered locus">At5g11150</name>
    <name evidence="13" type="ORF">F2I11.40</name>
</gene>